<evidence type="ECO:0000250" key="1"/>
<evidence type="ECO:0000255" key="2"/>
<evidence type="ECO:0000256" key="3">
    <source>
        <dbReference type="SAM" id="MobiDB-lite"/>
    </source>
</evidence>
<evidence type="ECO:0000305" key="4"/>
<sequence>MSQGWRGGWSGGRGGNPYAGGWRGRPWRGRGQGGSWSRNSGRDPVCFSTAPPKPQLTQTTLDKYIPYKGWKLYFSEAYSDSSPFLEKVRAFEKFFTKQIELYDKDEIERKGSILVDYKDLLQDEDLSASIPMSSELKEMPEKILECMGLAIHQVLTKDLERHAAELQEQEGLRTEEAPIVNVPFIHARVFNYDPLTPLKNLRASLYGKYVALRGTVVRVSNIKPLCVKMAFSCNMCGDIQSFPFPDGKYAVPTKCPVPECRGRSFTANRSSPLTVTVDWQTIKVQELMSDDQREAGRIPRTVECELIQDLVDSCVPGDMVTVTGIVKVSNTRDGGFKNKNNKCMFLLYIEANSVSNSKGHKIKSTDDSESHGASMDFSLKDLYAIQEIQAQENLFQLIVNSLCPTIYGHELVKAGLSLALFGGCQKYADDKNRIPIRGDPHILVVGDPGLGKSQMLQAVCNVAPRGVYVCGNTTTTSGLTVTLSRDSATGDFGLEAGALILGDQGICGIDEFDKMGNQHQALLEAMEQQSISLAKAGIVCSLPARTSIIAAANPVGGHYNKGKTVSENLKMGSALLSRFDLVFILLDTPNEDHDHLLSEHVMAMRAGAKEMQSADLTCPTTQNSNTSVLEEPSERPLGERLKLRPGEHFDPIPHQLLRKYVGYARQYVHPTLSPDAAQVLQDFYLELRKQNQGIDSTPITTRQLESLIRLTEARARLELREKATKDDAEEVVQIMKYSLLGTFSDEFGKLDFHRSQHGSGMSNRSKAKKFISALNRIAEQTYNNLFEFQQLRQIAKELQIQLLGKFNHSDKMATEIPNLRAAPGNQLRPKGSVSVLITTWDCA</sequence>
<gene>
    <name type="primary">mcm8</name>
</gene>
<proteinExistence type="evidence at transcript level"/>
<protein>
    <recommendedName>
        <fullName>DNA helicase MCM8</fullName>
        <ecNumber>3.6.4.12</ecNumber>
    </recommendedName>
    <alternativeName>
        <fullName>Minichromosome maintenance 8</fullName>
    </alternativeName>
</protein>
<name>MCM8_XENTR</name>
<feature type="chain" id="PRO_0000419474" description="DNA helicase MCM8">
    <location>
        <begin position="1"/>
        <end position="843"/>
    </location>
</feature>
<feature type="domain" description="MCM">
    <location>
        <begin position="394"/>
        <end position="601"/>
    </location>
</feature>
<feature type="region of interest" description="Disordered" evidence="3">
    <location>
        <begin position="1"/>
        <end position="52"/>
    </location>
</feature>
<feature type="compositionally biased region" description="Gly residues" evidence="3">
    <location>
        <begin position="1"/>
        <end position="23"/>
    </location>
</feature>
<feature type="binding site" evidence="2">
    <location>
        <begin position="446"/>
        <end position="453"/>
    </location>
    <ligand>
        <name>ATP</name>
        <dbReference type="ChEBI" id="CHEBI:30616"/>
    </ligand>
</feature>
<accession>Q0V9Q6</accession>
<dbReference type="EC" id="3.6.4.12"/>
<dbReference type="EMBL" id="AAMC01063807">
    <property type="status" value="NOT_ANNOTATED_CDS"/>
    <property type="molecule type" value="Genomic_DNA"/>
</dbReference>
<dbReference type="EMBL" id="AAMC01063808">
    <property type="status" value="NOT_ANNOTATED_CDS"/>
    <property type="molecule type" value="Genomic_DNA"/>
</dbReference>
<dbReference type="EMBL" id="AAMC01063809">
    <property type="status" value="NOT_ANNOTATED_CDS"/>
    <property type="molecule type" value="Genomic_DNA"/>
</dbReference>
<dbReference type="EMBL" id="AAMC01063810">
    <property type="status" value="NOT_ANNOTATED_CDS"/>
    <property type="molecule type" value="Genomic_DNA"/>
</dbReference>
<dbReference type="EMBL" id="AAMC01063811">
    <property type="status" value="NOT_ANNOTATED_CDS"/>
    <property type="molecule type" value="Genomic_DNA"/>
</dbReference>
<dbReference type="EMBL" id="AAMC01063812">
    <property type="status" value="NOT_ANNOTATED_CDS"/>
    <property type="molecule type" value="Genomic_DNA"/>
</dbReference>
<dbReference type="EMBL" id="AAMC01063813">
    <property type="status" value="NOT_ANNOTATED_CDS"/>
    <property type="molecule type" value="Genomic_DNA"/>
</dbReference>
<dbReference type="EMBL" id="AAMC01063814">
    <property type="status" value="NOT_ANNOTATED_CDS"/>
    <property type="molecule type" value="Genomic_DNA"/>
</dbReference>
<dbReference type="EMBL" id="BC121433">
    <property type="protein sequence ID" value="AAI21434.1"/>
    <property type="molecule type" value="mRNA"/>
</dbReference>
<dbReference type="RefSeq" id="NP_001072344.1">
    <property type="nucleotide sequence ID" value="NM_001078876.1"/>
</dbReference>
<dbReference type="SMR" id="Q0V9Q6"/>
<dbReference type="FunCoup" id="Q0V9Q6">
    <property type="interactions" value="1638"/>
</dbReference>
<dbReference type="STRING" id="8364.ENSXETP00000022375"/>
<dbReference type="PaxDb" id="8364-ENSXETP00000060047"/>
<dbReference type="DNASU" id="779797"/>
<dbReference type="GeneID" id="779797"/>
<dbReference type="KEGG" id="xtr:779797"/>
<dbReference type="AGR" id="Xenbase:XB-GENE-961372"/>
<dbReference type="CTD" id="84515"/>
<dbReference type="Xenbase" id="XB-GENE-961372">
    <property type="gene designation" value="mcm8"/>
</dbReference>
<dbReference type="eggNOG" id="KOG0480">
    <property type="taxonomic scope" value="Eukaryota"/>
</dbReference>
<dbReference type="InParanoid" id="Q0V9Q6"/>
<dbReference type="OMA" id="THTVDWQ"/>
<dbReference type="OrthoDB" id="422555at2759"/>
<dbReference type="PhylomeDB" id="Q0V9Q6"/>
<dbReference type="TreeFam" id="TF323155"/>
<dbReference type="Reactome" id="R-XTR-68689">
    <property type="pathway name" value="CDC6 association with the ORC:origin complex"/>
</dbReference>
<dbReference type="Reactome" id="R-XTR-68949">
    <property type="pathway name" value="Orc1 removal from chromatin"/>
</dbReference>
<dbReference type="Reactome" id="R-XTR-68962">
    <property type="pathway name" value="Activation of the pre-replicative complex"/>
</dbReference>
<dbReference type="Proteomes" id="UP000008143">
    <property type="component" value="Chromosome 5"/>
</dbReference>
<dbReference type="Bgee" id="ENSXETG00000004500">
    <property type="expression patterns" value="Expressed in testis and 11 other cell types or tissues"/>
</dbReference>
<dbReference type="ExpressionAtlas" id="Q0V9Q6">
    <property type="expression patterns" value="baseline"/>
</dbReference>
<dbReference type="GO" id="GO:0097362">
    <property type="term" value="C:MCM8-MCM9 complex"/>
    <property type="evidence" value="ECO:0000250"/>
    <property type="project" value="UniProtKB"/>
</dbReference>
<dbReference type="GO" id="GO:0005634">
    <property type="term" value="C:nucleus"/>
    <property type="evidence" value="ECO:0007669"/>
    <property type="project" value="UniProtKB-SubCell"/>
</dbReference>
<dbReference type="GO" id="GO:0005524">
    <property type="term" value="F:ATP binding"/>
    <property type="evidence" value="ECO:0007669"/>
    <property type="project" value="UniProtKB-KW"/>
</dbReference>
<dbReference type="GO" id="GO:0016887">
    <property type="term" value="F:ATP hydrolysis activity"/>
    <property type="evidence" value="ECO:0007669"/>
    <property type="project" value="InterPro"/>
</dbReference>
<dbReference type="GO" id="GO:0003677">
    <property type="term" value="F:DNA binding"/>
    <property type="evidence" value="ECO:0007669"/>
    <property type="project" value="UniProtKB-KW"/>
</dbReference>
<dbReference type="GO" id="GO:0004386">
    <property type="term" value="F:helicase activity"/>
    <property type="evidence" value="ECO:0007669"/>
    <property type="project" value="UniProtKB-KW"/>
</dbReference>
<dbReference type="GO" id="GO:0006974">
    <property type="term" value="P:DNA damage response"/>
    <property type="evidence" value="ECO:0000250"/>
    <property type="project" value="UniProtKB"/>
</dbReference>
<dbReference type="GO" id="GO:0006260">
    <property type="term" value="P:DNA replication"/>
    <property type="evidence" value="ECO:0007669"/>
    <property type="project" value="UniProtKB-KW"/>
</dbReference>
<dbReference type="GO" id="GO:0000724">
    <property type="term" value="P:double-strand break repair via homologous recombination"/>
    <property type="evidence" value="ECO:0000250"/>
    <property type="project" value="UniProtKB"/>
</dbReference>
<dbReference type="GO" id="GO:0030174">
    <property type="term" value="P:regulation of DNA-templated DNA replication initiation"/>
    <property type="evidence" value="ECO:0007669"/>
    <property type="project" value="UniProtKB-ARBA"/>
</dbReference>
<dbReference type="CDD" id="cd17759">
    <property type="entry name" value="MCM8"/>
    <property type="match status" value="1"/>
</dbReference>
<dbReference type="CDD" id="cd22247">
    <property type="entry name" value="MCM8_WHD"/>
    <property type="match status" value="1"/>
</dbReference>
<dbReference type="FunFam" id="2.20.28.10:FF:000007">
    <property type="entry name" value="DNA helicase MCM8 isoform X1"/>
    <property type="match status" value="1"/>
</dbReference>
<dbReference type="FunFam" id="2.40.50.140:FF:000487">
    <property type="entry name" value="Minichromosome maintenance 8 homologous recombination repair factor"/>
    <property type="match status" value="1"/>
</dbReference>
<dbReference type="Gene3D" id="2.20.28.10">
    <property type="match status" value="1"/>
</dbReference>
<dbReference type="Gene3D" id="2.40.50.140">
    <property type="entry name" value="Nucleic acid-binding proteins"/>
    <property type="match status" value="1"/>
</dbReference>
<dbReference type="Gene3D" id="3.40.50.300">
    <property type="entry name" value="P-loop containing nucleotide triphosphate hydrolases"/>
    <property type="match status" value="1"/>
</dbReference>
<dbReference type="InterPro" id="IPR003593">
    <property type="entry name" value="AAA+_ATPase"/>
</dbReference>
<dbReference type="InterPro" id="IPR031327">
    <property type="entry name" value="MCM"/>
</dbReference>
<dbReference type="InterPro" id="IPR056875">
    <property type="entry name" value="MCM8/REC_WHD"/>
</dbReference>
<dbReference type="InterPro" id="IPR001208">
    <property type="entry name" value="MCM_dom"/>
</dbReference>
<dbReference type="InterPro" id="IPR041562">
    <property type="entry name" value="MCM_lid"/>
</dbReference>
<dbReference type="InterPro" id="IPR033762">
    <property type="entry name" value="MCM_OB"/>
</dbReference>
<dbReference type="InterPro" id="IPR012340">
    <property type="entry name" value="NA-bd_OB-fold"/>
</dbReference>
<dbReference type="InterPro" id="IPR027417">
    <property type="entry name" value="P-loop_NTPase"/>
</dbReference>
<dbReference type="PANTHER" id="PTHR11630:SF47">
    <property type="entry name" value="DNA HELICASE MCM8"/>
    <property type="match status" value="1"/>
</dbReference>
<dbReference type="PANTHER" id="PTHR11630">
    <property type="entry name" value="DNA REPLICATION LICENSING FACTOR MCM FAMILY MEMBER"/>
    <property type="match status" value="1"/>
</dbReference>
<dbReference type="Pfam" id="PF00493">
    <property type="entry name" value="MCM"/>
    <property type="match status" value="1"/>
</dbReference>
<dbReference type="Pfam" id="PF17855">
    <property type="entry name" value="MCM_lid"/>
    <property type="match status" value="1"/>
</dbReference>
<dbReference type="Pfam" id="PF17207">
    <property type="entry name" value="MCM_OB"/>
    <property type="match status" value="1"/>
</dbReference>
<dbReference type="Pfam" id="PF25051">
    <property type="entry name" value="WHD_MCM8"/>
    <property type="match status" value="1"/>
</dbReference>
<dbReference type="PRINTS" id="PR01657">
    <property type="entry name" value="MCMFAMILY"/>
</dbReference>
<dbReference type="SMART" id="SM00382">
    <property type="entry name" value="AAA"/>
    <property type="match status" value="1"/>
</dbReference>
<dbReference type="SMART" id="SM00350">
    <property type="entry name" value="MCM"/>
    <property type="match status" value="1"/>
</dbReference>
<dbReference type="SUPFAM" id="SSF50249">
    <property type="entry name" value="Nucleic acid-binding proteins"/>
    <property type="match status" value="1"/>
</dbReference>
<dbReference type="SUPFAM" id="SSF52540">
    <property type="entry name" value="P-loop containing nucleoside triphosphate hydrolases"/>
    <property type="match status" value="1"/>
</dbReference>
<dbReference type="PROSITE" id="PS50051">
    <property type="entry name" value="MCM_2"/>
    <property type="match status" value="1"/>
</dbReference>
<organism>
    <name type="scientific">Xenopus tropicalis</name>
    <name type="common">Western clawed frog</name>
    <name type="synonym">Silurana tropicalis</name>
    <dbReference type="NCBI Taxonomy" id="8364"/>
    <lineage>
        <taxon>Eukaryota</taxon>
        <taxon>Metazoa</taxon>
        <taxon>Chordata</taxon>
        <taxon>Craniata</taxon>
        <taxon>Vertebrata</taxon>
        <taxon>Euteleostomi</taxon>
        <taxon>Amphibia</taxon>
        <taxon>Batrachia</taxon>
        <taxon>Anura</taxon>
        <taxon>Pipoidea</taxon>
        <taxon>Pipidae</taxon>
        <taxon>Xenopodinae</taxon>
        <taxon>Xenopus</taxon>
        <taxon>Silurana</taxon>
    </lineage>
</organism>
<comment type="function">
    <text evidence="1">Component of the MCM8-MCM9 complex, a complex involved in homologous recombination repair following DNA interstrand cross-links and plays a key role during gametogenesis. The MCM8-MCM9 complex probably acts as a hexameric helicase required to process aberrant forks into homologous recombination substrates and to orchestrate homologous recombination with resection, fork stabilization and fork restart. In eggs, required for elongation during DNA replication by facilitating the recruitment of rpa2/rpa34 and stimulating the processivity of DNA polymerases at replication foci. Probably not required for DNA replication in other cells (By similarity).</text>
</comment>
<comment type="catalytic activity">
    <reaction>
        <text>ATP + H2O = ADP + phosphate + H(+)</text>
        <dbReference type="Rhea" id="RHEA:13065"/>
        <dbReference type="ChEBI" id="CHEBI:15377"/>
        <dbReference type="ChEBI" id="CHEBI:15378"/>
        <dbReference type="ChEBI" id="CHEBI:30616"/>
        <dbReference type="ChEBI" id="CHEBI:43474"/>
        <dbReference type="ChEBI" id="CHEBI:456216"/>
        <dbReference type="EC" id="3.6.4.12"/>
    </reaction>
</comment>
<comment type="subunit">
    <text evidence="1">Component of the MCM8-MCM9 complex, which forms a hexamer composed of mcm8 and mcm9.</text>
</comment>
<comment type="subcellular location">
    <subcellularLocation>
        <location evidence="1">Nucleus</location>
    </subcellularLocation>
    <text evidence="1">Localizes to nuclear foci and colocalizes with rad51.</text>
</comment>
<comment type="similarity">
    <text evidence="4">Belongs to the MCM family.</text>
</comment>
<keyword id="KW-0067">ATP-binding</keyword>
<keyword id="KW-0131">Cell cycle</keyword>
<keyword id="KW-0227">DNA damage</keyword>
<keyword id="KW-0234">DNA repair</keyword>
<keyword id="KW-0235">DNA replication</keyword>
<keyword id="KW-0238">DNA-binding</keyword>
<keyword id="KW-0347">Helicase</keyword>
<keyword id="KW-0378">Hydrolase</keyword>
<keyword id="KW-0547">Nucleotide-binding</keyword>
<keyword id="KW-0539">Nucleus</keyword>
<keyword id="KW-1185">Reference proteome</keyword>
<reference key="1">
    <citation type="journal article" date="2010" name="Science">
        <title>The genome of the Western clawed frog Xenopus tropicalis.</title>
        <authorList>
            <person name="Hellsten U."/>
            <person name="Harland R.M."/>
            <person name="Gilchrist M.J."/>
            <person name="Hendrix D."/>
            <person name="Jurka J."/>
            <person name="Kapitonov V."/>
            <person name="Ovcharenko I."/>
            <person name="Putnam N.H."/>
            <person name="Shu S."/>
            <person name="Taher L."/>
            <person name="Blitz I.L."/>
            <person name="Blumberg B."/>
            <person name="Dichmann D.S."/>
            <person name="Dubchak I."/>
            <person name="Amaya E."/>
            <person name="Detter J.C."/>
            <person name="Fletcher R."/>
            <person name="Gerhard D.S."/>
            <person name="Goodstein D."/>
            <person name="Graves T."/>
            <person name="Grigoriev I.V."/>
            <person name="Grimwood J."/>
            <person name="Kawashima T."/>
            <person name="Lindquist E."/>
            <person name="Lucas S.M."/>
            <person name="Mead P.E."/>
            <person name="Mitros T."/>
            <person name="Ogino H."/>
            <person name="Ohta Y."/>
            <person name="Poliakov A.V."/>
            <person name="Pollet N."/>
            <person name="Robert J."/>
            <person name="Salamov A."/>
            <person name="Sater A.K."/>
            <person name="Schmutz J."/>
            <person name="Terry A."/>
            <person name="Vize P.D."/>
            <person name="Warren W.C."/>
            <person name="Wells D."/>
            <person name="Wills A."/>
            <person name="Wilson R.K."/>
            <person name="Zimmerman L.B."/>
            <person name="Zorn A.M."/>
            <person name="Grainger R."/>
            <person name="Grammer T."/>
            <person name="Khokha M.K."/>
            <person name="Richardson P.M."/>
            <person name="Rokhsar D.S."/>
        </authorList>
    </citation>
    <scope>NUCLEOTIDE SEQUENCE [LARGE SCALE GENOMIC DNA]</scope>
</reference>
<reference key="2">
    <citation type="submission" date="2006-08" db="EMBL/GenBank/DDBJ databases">
        <authorList>
            <consortium name="NIH - Xenopus Gene Collection (XGC) project"/>
        </authorList>
    </citation>
    <scope>NUCLEOTIDE SEQUENCE [LARGE SCALE MRNA]</scope>
    <source>
        <tissue>Testis</tissue>
    </source>
</reference>